<gene>
    <name type="primary">mrp</name>
    <name type="ordered locus">DR_0998</name>
</gene>
<keyword id="KW-0067">ATP-binding</keyword>
<keyword id="KW-0378">Hydrolase</keyword>
<keyword id="KW-0408">Iron</keyword>
<keyword id="KW-0411">Iron-sulfur</keyword>
<keyword id="KW-0479">Metal-binding</keyword>
<keyword id="KW-0547">Nucleotide-binding</keyword>
<keyword id="KW-1185">Reference proteome</keyword>
<accession>Q9RVM9</accession>
<dbReference type="EMBL" id="AE000513">
    <property type="protein sequence ID" value="AAF10574.1"/>
    <property type="molecule type" value="Genomic_DNA"/>
</dbReference>
<dbReference type="PIR" id="F75448">
    <property type="entry name" value="F75448"/>
</dbReference>
<dbReference type="RefSeq" id="NP_294722.1">
    <property type="nucleotide sequence ID" value="NC_001263.1"/>
</dbReference>
<dbReference type="RefSeq" id="WP_010887641.1">
    <property type="nucleotide sequence ID" value="NC_001263.1"/>
</dbReference>
<dbReference type="SMR" id="Q9RVM9"/>
<dbReference type="FunCoup" id="Q9RVM9">
    <property type="interactions" value="393"/>
</dbReference>
<dbReference type="STRING" id="243230.DR_0998"/>
<dbReference type="PaxDb" id="243230-DR_0998"/>
<dbReference type="EnsemblBacteria" id="AAF10574">
    <property type="protein sequence ID" value="AAF10574"/>
    <property type="gene ID" value="DR_0998"/>
</dbReference>
<dbReference type="GeneID" id="69517244"/>
<dbReference type="KEGG" id="dra:DR_0998"/>
<dbReference type="PATRIC" id="fig|243230.17.peg.1187"/>
<dbReference type="eggNOG" id="COG0489">
    <property type="taxonomic scope" value="Bacteria"/>
</dbReference>
<dbReference type="HOGENOM" id="CLU_024839_0_0_0"/>
<dbReference type="InParanoid" id="Q9RVM9"/>
<dbReference type="OrthoDB" id="9809679at2"/>
<dbReference type="Proteomes" id="UP000002524">
    <property type="component" value="Chromosome 1"/>
</dbReference>
<dbReference type="GO" id="GO:0051539">
    <property type="term" value="F:4 iron, 4 sulfur cluster binding"/>
    <property type="evidence" value="ECO:0000318"/>
    <property type="project" value="GO_Central"/>
</dbReference>
<dbReference type="GO" id="GO:0005524">
    <property type="term" value="F:ATP binding"/>
    <property type="evidence" value="ECO:0007669"/>
    <property type="project" value="UniProtKB-UniRule"/>
</dbReference>
<dbReference type="GO" id="GO:0016887">
    <property type="term" value="F:ATP hydrolysis activity"/>
    <property type="evidence" value="ECO:0007669"/>
    <property type="project" value="UniProtKB-UniRule"/>
</dbReference>
<dbReference type="GO" id="GO:0140663">
    <property type="term" value="F:ATP-dependent FeS chaperone activity"/>
    <property type="evidence" value="ECO:0007669"/>
    <property type="project" value="InterPro"/>
</dbReference>
<dbReference type="GO" id="GO:0046872">
    <property type="term" value="F:metal ion binding"/>
    <property type="evidence" value="ECO:0007669"/>
    <property type="project" value="UniProtKB-KW"/>
</dbReference>
<dbReference type="GO" id="GO:0016226">
    <property type="term" value="P:iron-sulfur cluster assembly"/>
    <property type="evidence" value="ECO:0000318"/>
    <property type="project" value="GO_Central"/>
</dbReference>
<dbReference type="CDD" id="cd02037">
    <property type="entry name" value="Mrp_NBP35"/>
    <property type="match status" value="1"/>
</dbReference>
<dbReference type="FunFam" id="3.40.50.300:FF:001119">
    <property type="entry name" value="Iron-sulfur cluster carrier protein"/>
    <property type="match status" value="1"/>
</dbReference>
<dbReference type="Gene3D" id="3.30.300.130">
    <property type="entry name" value="Fe-S cluster assembly (FSCA)"/>
    <property type="match status" value="1"/>
</dbReference>
<dbReference type="Gene3D" id="3.40.50.300">
    <property type="entry name" value="P-loop containing nucleotide triphosphate hydrolases"/>
    <property type="match status" value="1"/>
</dbReference>
<dbReference type="HAMAP" id="MF_02040">
    <property type="entry name" value="Mrp_NBP35"/>
    <property type="match status" value="1"/>
</dbReference>
<dbReference type="InterPro" id="IPR034904">
    <property type="entry name" value="FSCA_dom_sf"/>
</dbReference>
<dbReference type="InterPro" id="IPR002744">
    <property type="entry name" value="MIP18-like"/>
</dbReference>
<dbReference type="InterPro" id="IPR000808">
    <property type="entry name" value="Mrp-like_CS"/>
</dbReference>
<dbReference type="InterPro" id="IPR019591">
    <property type="entry name" value="Mrp/NBP35_ATP-bd"/>
</dbReference>
<dbReference type="InterPro" id="IPR044304">
    <property type="entry name" value="NUBPL-like"/>
</dbReference>
<dbReference type="InterPro" id="IPR027417">
    <property type="entry name" value="P-loop_NTPase"/>
</dbReference>
<dbReference type="InterPro" id="IPR033756">
    <property type="entry name" value="YlxH/NBP35"/>
</dbReference>
<dbReference type="PANTHER" id="PTHR42961">
    <property type="entry name" value="IRON-SULFUR PROTEIN NUBPL"/>
    <property type="match status" value="1"/>
</dbReference>
<dbReference type="PANTHER" id="PTHR42961:SF2">
    <property type="entry name" value="IRON-SULFUR PROTEIN NUBPL"/>
    <property type="match status" value="1"/>
</dbReference>
<dbReference type="Pfam" id="PF01883">
    <property type="entry name" value="FeS_assembly_P"/>
    <property type="match status" value="1"/>
</dbReference>
<dbReference type="Pfam" id="PF10609">
    <property type="entry name" value="ParA"/>
    <property type="match status" value="1"/>
</dbReference>
<dbReference type="SUPFAM" id="SSF117916">
    <property type="entry name" value="Fe-S cluster assembly (FSCA) domain-like"/>
    <property type="match status" value="1"/>
</dbReference>
<dbReference type="SUPFAM" id="SSF52540">
    <property type="entry name" value="P-loop containing nucleoside triphosphate hydrolases"/>
    <property type="match status" value="1"/>
</dbReference>
<dbReference type="PROSITE" id="PS01215">
    <property type="entry name" value="MRP"/>
    <property type="match status" value="1"/>
</dbReference>
<sequence length="350" mass="36913">MNDALLRALSTVNDPELHRDLVSLGMIERAELSGDVAQVKVNLTTPACPLKGQIELDVRSALLQVPGVRDVQIEFGAMVRAATQPALPGVKHVVLVGSGKGGVGKSSVAVNLAASLARDGARVGLLDADVYGPSVAHMLGQGQARVTANEDRKMRPIEAHGVRFISMANLSPAGQALVWRGPMLHSAIQQFLKDSAWGELDYLIVDLPPGTGDVQLSLTQTVQVTGAVIVTTPQDVALIDAARAIDMFRKASVPVLGVVENMSYFVAPDTGLTYDIFGRGGSRKLGEQYPLLGEIPLDVEVRKDADAGAPAILAHPESVAAQALRAVARTLAGQISVRTLSELPEQLPVL</sequence>
<name>APBC_DEIRA</name>
<protein>
    <recommendedName>
        <fullName evidence="1">Iron-sulfur cluster carrier protein</fullName>
    </recommendedName>
</protein>
<evidence type="ECO:0000255" key="1">
    <source>
        <dbReference type="HAMAP-Rule" id="MF_02040"/>
    </source>
</evidence>
<evidence type="ECO:0000305" key="2"/>
<proteinExistence type="inferred from homology"/>
<comment type="function">
    <text evidence="1">Binds and transfers iron-sulfur (Fe-S) clusters to target apoproteins. Can hydrolyze ATP.</text>
</comment>
<comment type="subunit">
    <text evidence="1">Homodimer.</text>
</comment>
<comment type="similarity">
    <text evidence="2">In the N-terminal section; belongs to the MIP18 family.</text>
</comment>
<comment type="similarity">
    <text evidence="2">In the C-terminal section; belongs to the Mrp/NBP35 ATP-binding proteins family.</text>
</comment>
<organism>
    <name type="scientific">Deinococcus radiodurans (strain ATCC 13939 / DSM 20539 / JCM 16871 / CCUG 27074 / LMG 4051 / NBRC 15346 / NCIMB 9279 / VKM B-1422 / R1)</name>
    <dbReference type="NCBI Taxonomy" id="243230"/>
    <lineage>
        <taxon>Bacteria</taxon>
        <taxon>Thermotogati</taxon>
        <taxon>Deinococcota</taxon>
        <taxon>Deinococci</taxon>
        <taxon>Deinococcales</taxon>
        <taxon>Deinococcaceae</taxon>
        <taxon>Deinococcus</taxon>
    </lineage>
</organism>
<reference key="1">
    <citation type="journal article" date="1999" name="Science">
        <title>Genome sequence of the radioresistant bacterium Deinococcus radiodurans R1.</title>
        <authorList>
            <person name="White O."/>
            <person name="Eisen J.A."/>
            <person name="Heidelberg J.F."/>
            <person name="Hickey E.K."/>
            <person name="Peterson J.D."/>
            <person name="Dodson R.J."/>
            <person name="Haft D.H."/>
            <person name="Gwinn M.L."/>
            <person name="Nelson W.C."/>
            <person name="Richardson D.L."/>
            <person name="Moffat K.S."/>
            <person name="Qin H."/>
            <person name="Jiang L."/>
            <person name="Pamphile W."/>
            <person name="Crosby M."/>
            <person name="Shen M."/>
            <person name="Vamathevan J.J."/>
            <person name="Lam P."/>
            <person name="McDonald L.A."/>
            <person name="Utterback T.R."/>
            <person name="Zalewski C."/>
            <person name="Makarova K.S."/>
            <person name="Aravind L."/>
            <person name="Daly M.J."/>
            <person name="Minton K.W."/>
            <person name="Fleischmann R.D."/>
            <person name="Ketchum K.A."/>
            <person name="Nelson K.E."/>
            <person name="Salzberg S.L."/>
            <person name="Smith H.O."/>
            <person name="Venter J.C."/>
            <person name="Fraser C.M."/>
        </authorList>
    </citation>
    <scope>NUCLEOTIDE SEQUENCE [LARGE SCALE GENOMIC DNA]</scope>
    <source>
        <strain>ATCC 13939 / DSM 20539 / JCM 16871 / CCUG 27074 / LMG 4051 / NBRC 15346 / NCIMB 9279 / VKM B-1422 / R1</strain>
    </source>
</reference>
<feature type="chain" id="PRO_0000184931" description="Iron-sulfur cluster carrier protein">
    <location>
        <begin position="1"/>
        <end position="350"/>
    </location>
</feature>
<feature type="binding site" evidence="1">
    <location>
        <begin position="99"/>
        <end position="106"/>
    </location>
    <ligand>
        <name>ATP</name>
        <dbReference type="ChEBI" id="CHEBI:30616"/>
    </ligand>
</feature>